<reference key="1">
    <citation type="journal article" date="2001" name="Lancet">
        <title>Whole genome sequencing of meticillin-resistant Staphylococcus aureus.</title>
        <authorList>
            <person name="Kuroda M."/>
            <person name="Ohta T."/>
            <person name="Uchiyama I."/>
            <person name="Baba T."/>
            <person name="Yuzawa H."/>
            <person name="Kobayashi I."/>
            <person name="Cui L."/>
            <person name="Oguchi A."/>
            <person name="Aoki K."/>
            <person name="Nagai Y."/>
            <person name="Lian J.-Q."/>
            <person name="Ito T."/>
            <person name="Kanamori M."/>
            <person name="Matsumaru H."/>
            <person name="Maruyama A."/>
            <person name="Murakami H."/>
            <person name="Hosoyama A."/>
            <person name="Mizutani-Ui Y."/>
            <person name="Takahashi N.K."/>
            <person name="Sawano T."/>
            <person name="Inoue R."/>
            <person name="Kaito C."/>
            <person name="Sekimizu K."/>
            <person name="Hirakawa H."/>
            <person name="Kuhara S."/>
            <person name="Goto S."/>
            <person name="Yabuzaki J."/>
            <person name="Kanehisa M."/>
            <person name="Yamashita A."/>
            <person name="Oshima K."/>
            <person name="Furuya K."/>
            <person name="Yoshino C."/>
            <person name="Shiba T."/>
            <person name="Hattori M."/>
            <person name="Ogasawara N."/>
            <person name="Hayashi H."/>
            <person name="Hiramatsu K."/>
        </authorList>
    </citation>
    <scope>NUCLEOTIDE SEQUENCE [LARGE SCALE GENOMIC DNA]</scope>
    <source>
        <strain>N315</strain>
    </source>
</reference>
<reference key="2">
    <citation type="journal article" date="2005" name="J. Microbiol. Methods">
        <title>Correlation of proteomic and transcriptomic profiles of Staphylococcus aureus during the post-exponential phase of growth.</title>
        <authorList>
            <person name="Scherl A."/>
            <person name="Francois P."/>
            <person name="Bento M."/>
            <person name="Deshusses J.M."/>
            <person name="Charbonnier Y."/>
            <person name="Converset V."/>
            <person name="Huyghe A."/>
            <person name="Walter N."/>
            <person name="Hoogland C."/>
            <person name="Appel R.D."/>
            <person name="Sanchez J.-C."/>
            <person name="Zimmermann-Ivol C.G."/>
            <person name="Corthals G.L."/>
            <person name="Hochstrasser D.F."/>
            <person name="Schrenzel J."/>
        </authorList>
    </citation>
    <scope>IDENTIFICATION BY MASS SPECTROMETRY</scope>
    <source>
        <strain>N315</strain>
    </source>
</reference>
<reference key="3">
    <citation type="submission" date="2007-10" db="UniProtKB">
        <title>Shotgun proteomic analysis of total and membrane protein extracts of S. aureus strain N315.</title>
        <authorList>
            <person name="Vaezzadeh A.R."/>
            <person name="Deshusses J."/>
            <person name="Lescuyer P."/>
            <person name="Hochstrasser D.F."/>
        </authorList>
    </citation>
    <scope>IDENTIFICATION BY MASS SPECTROMETRY [LARGE SCALE ANALYSIS]</scope>
    <source>
        <strain>N315</strain>
    </source>
</reference>
<feature type="chain" id="PRO_0000223328" description="NAD-specific glutamate dehydrogenase">
    <location>
        <begin position="1"/>
        <end position="414"/>
    </location>
</feature>
<feature type="active site" description="Proton donor" evidence="2">
    <location>
        <position position="106"/>
    </location>
</feature>
<feature type="binding site" evidence="1">
    <location>
        <position position="70"/>
    </location>
    <ligand>
        <name>substrate</name>
    </ligand>
</feature>
<feature type="binding site" evidence="1">
    <location>
        <position position="94"/>
    </location>
    <ligand>
        <name>substrate</name>
    </ligand>
</feature>
<feature type="binding site" evidence="1">
    <location>
        <position position="190"/>
    </location>
    <ligand>
        <name>NAD(+)</name>
        <dbReference type="ChEBI" id="CHEBI:57540"/>
    </ligand>
</feature>
<feature type="binding site" evidence="1">
    <location>
        <position position="221"/>
    </location>
    <ligand>
        <name>NAD(+)</name>
        <dbReference type="ChEBI" id="CHEBI:57540"/>
    </ligand>
</feature>
<feature type="binding site" evidence="1">
    <location>
        <position position="348"/>
    </location>
    <ligand>
        <name>substrate</name>
    </ligand>
</feature>
<feature type="site" description="Important for catalysis" evidence="1">
    <location>
        <position position="146"/>
    </location>
</feature>
<keyword id="KW-0520">NAD</keyword>
<keyword id="KW-0560">Oxidoreductase</keyword>
<proteinExistence type="evidence at protein level"/>
<name>DHE2_STAAN</name>
<comment type="catalytic activity">
    <reaction>
        <text>L-glutamate + NAD(+) + H2O = 2-oxoglutarate + NH4(+) + NADH + H(+)</text>
        <dbReference type="Rhea" id="RHEA:15133"/>
        <dbReference type="ChEBI" id="CHEBI:15377"/>
        <dbReference type="ChEBI" id="CHEBI:15378"/>
        <dbReference type="ChEBI" id="CHEBI:16810"/>
        <dbReference type="ChEBI" id="CHEBI:28938"/>
        <dbReference type="ChEBI" id="CHEBI:29985"/>
        <dbReference type="ChEBI" id="CHEBI:57540"/>
        <dbReference type="ChEBI" id="CHEBI:57945"/>
        <dbReference type="EC" id="1.4.1.2"/>
    </reaction>
</comment>
<comment type="subunit">
    <text evidence="1">Homohexamer.</text>
</comment>
<comment type="similarity">
    <text evidence="3">Belongs to the Glu/Leu/Phe/Val dehydrogenases family.</text>
</comment>
<sequence>MTENNNLVTSTQGIIKEALHKLGFDEGMYDLIKEPLRMLQVRIPVRMDDGTVKTFTGYRAQHNDAVGPTKGGVRFHPDVDEEEVKALSMWMTLKCGIVNLPYGGGKGGIVCDPRQMSIHEVERLSRGYVRAISQFVGPNKDIPAPDVFTNSQIMAWMMDEYSALDKFNSPGFITGKPIVLGGSHGRDRSTALGVVIAIEQAAKRRNMQIEGAKVVIQGFGNAGSFLAKFLYDLGAKIVGISDAYGALHDPNGLDIDYLLDRRDSFGTVTNLFEETISNKELFELDCDILVPAAISNQITEDNAHDIKASIVVEAANGPTTPEATRILTERGILLVPDVLASAGGVTVSYFEWVQNNQGYYWSEEEVNEKLREKLEAAFDTIYELSQNRKIDMRLAAYIIGIKRTAEAARYRGWA</sequence>
<protein>
    <recommendedName>
        <fullName>NAD-specific glutamate dehydrogenase</fullName>
        <shortName>NAD-GDH</shortName>
        <ecNumber>1.4.1.2</ecNumber>
    </recommendedName>
</protein>
<accession>Q7A6H8</accession>
<dbReference type="EC" id="1.4.1.2"/>
<dbReference type="EMBL" id="BA000018">
    <property type="protein sequence ID" value="BAB42058.1"/>
    <property type="molecule type" value="Genomic_DNA"/>
</dbReference>
<dbReference type="PIR" id="G89862">
    <property type="entry name" value="G89862"/>
</dbReference>
<dbReference type="RefSeq" id="WP_000138487.1">
    <property type="nucleotide sequence ID" value="NC_002745.2"/>
</dbReference>
<dbReference type="SMR" id="Q7A6H8"/>
<dbReference type="EnsemblBacteria" id="BAB42058">
    <property type="protein sequence ID" value="BAB42058"/>
    <property type="gene ID" value="BAB42058"/>
</dbReference>
<dbReference type="KEGG" id="sau:SA0819"/>
<dbReference type="HOGENOM" id="CLU_025763_1_2_9"/>
<dbReference type="GO" id="GO:0004352">
    <property type="term" value="F:glutamate dehydrogenase (NAD+) activity"/>
    <property type="evidence" value="ECO:0000250"/>
    <property type="project" value="UniProtKB"/>
</dbReference>
<dbReference type="GO" id="GO:0006520">
    <property type="term" value="P:amino acid metabolic process"/>
    <property type="evidence" value="ECO:0000250"/>
    <property type="project" value="UniProtKB"/>
</dbReference>
<dbReference type="GO" id="GO:0006538">
    <property type="term" value="P:glutamate catabolic process"/>
    <property type="evidence" value="ECO:0007669"/>
    <property type="project" value="TreeGrafter"/>
</dbReference>
<dbReference type="CDD" id="cd01076">
    <property type="entry name" value="NAD_bind_1_Glu_DH"/>
    <property type="match status" value="1"/>
</dbReference>
<dbReference type="FunFam" id="3.40.50.10860:FF:000008">
    <property type="entry name" value="Glutamate dehydrogenase"/>
    <property type="match status" value="1"/>
</dbReference>
<dbReference type="FunFam" id="3.40.50.720:FF:000242">
    <property type="entry name" value="Glutamate dehydrogenase"/>
    <property type="match status" value="1"/>
</dbReference>
<dbReference type="Gene3D" id="1.10.8.1210">
    <property type="match status" value="2"/>
</dbReference>
<dbReference type="Gene3D" id="3.40.50.10860">
    <property type="entry name" value="Leucine Dehydrogenase, chain A, domain 1"/>
    <property type="match status" value="1"/>
</dbReference>
<dbReference type="Gene3D" id="3.40.50.720">
    <property type="entry name" value="NAD(P)-binding Rossmann-like Domain"/>
    <property type="match status" value="1"/>
</dbReference>
<dbReference type="InterPro" id="IPR046346">
    <property type="entry name" value="Aminoacid_DH-like_N_sf"/>
</dbReference>
<dbReference type="InterPro" id="IPR006095">
    <property type="entry name" value="Glu/Leu/Phe/Val/Trp_DH"/>
</dbReference>
<dbReference type="InterPro" id="IPR006096">
    <property type="entry name" value="Glu/Leu/Phe/Val/Trp_DH_C"/>
</dbReference>
<dbReference type="InterPro" id="IPR006097">
    <property type="entry name" value="Glu/Leu/Phe/Val/Trp_DH_dimer"/>
</dbReference>
<dbReference type="InterPro" id="IPR033524">
    <property type="entry name" value="Glu/Leu/Phe/Val_DH_AS"/>
</dbReference>
<dbReference type="InterPro" id="IPR014362">
    <property type="entry name" value="Glu_DH"/>
</dbReference>
<dbReference type="InterPro" id="IPR036291">
    <property type="entry name" value="NAD(P)-bd_dom_sf"/>
</dbReference>
<dbReference type="InterPro" id="IPR033922">
    <property type="entry name" value="NAD_bind_Glu_DH"/>
</dbReference>
<dbReference type="PANTHER" id="PTHR11606">
    <property type="entry name" value="GLUTAMATE DEHYDROGENASE"/>
    <property type="match status" value="1"/>
</dbReference>
<dbReference type="PANTHER" id="PTHR11606:SF13">
    <property type="entry name" value="GLUTAMATE DEHYDROGENASE 1, MITOCHONDRIAL"/>
    <property type="match status" value="1"/>
</dbReference>
<dbReference type="Pfam" id="PF00208">
    <property type="entry name" value="ELFV_dehydrog"/>
    <property type="match status" value="1"/>
</dbReference>
<dbReference type="Pfam" id="PF02812">
    <property type="entry name" value="ELFV_dehydrog_N"/>
    <property type="match status" value="1"/>
</dbReference>
<dbReference type="PIRSF" id="PIRSF000185">
    <property type="entry name" value="Glu_DH"/>
    <property type="match status" value="1"/>
</dbReference>
<dbReference type="PRINTS" id="PR00082">
    <property type="entry name" value="GLFDHDRGNASE"/>
</dbReference>
<dbReference type="SMART" id="SM00839">
    <property type="entry name" value="ELFV_dehydrog"/>
    <property type="match status" value="1"/>
</dbReference>
<dbReference type="SUPFAM" id="SSF53223">
    <property type="entry name" value="Aminoacid dehydrogenase-like, N-terminal domain"/>
    <property type="match status" value="1"/>
</dbReference>
<dbReference type="SUPFAM" id="SSF51735">
    <property type="entry name" value="NAD(P)-binding Rossmann-fold domains"/>
    <property type="match status" value="1"/>
</dbReference>
<dbReference type="PROSITE" id="PS00074">
    <property type="entry name" value="GLFV_DEHYDROGENASE"/>
    <property type="match status" value="1"/>
</dbReference>
<gene>
    <name type="primary">gluD</name>
    <name type="synonym">gudB</name>
    <name type="ordered locus">SA0819</name>
</gene>
<organism>
    <name type="scientific">Staphylococcus aureus (strain N315)</name>
    <dbReference type="NCBI Taxonomy" id="158879"/>
    <lineage>
        <taxon>Bacteria</taxon>
        <taxon>Bacillati</taxon>
        <taxon>Bacillota</taxon>
        <taxon>Bacilli</taxon>
        <taxon>Bacillales</taxon>
        <taxon>Staphylococcaceae</taxon>
        <taxon>Staphylococcus</taxon>
    </lineage>
</organism>
<evidence type="ECO:0000250" key="1"/>
<evidence type="ECO:0000255" key="2">
    <source>
        <dbReference type="PROSITE-ProRule" id="PRU10011"/>
    </source>
</evidence>
<evidence type="ECO:0000305" key="3"/>